<accession>Q01513</accession>
<name>CYAA_PODAS</name>
<keyword id="KW-0067">ATP-binding</keyword>
<keyword id="KW-0115">cAMP biosynthesis</keyword>
<keyword id="KW-0433">Leucine-rich repeat</keyword>
<keyword id="KW-0456">Lyase</keyword>
<keyword id="KW-0460">Magnesium</keyword>
<keyword id="KW-0479">Metal-binding</keyword>
<keyword id="KW-0547">Nucleotide-binding</keyword>
<keyword id="KW-0677">Repeat</keyword>
<organism>
    <name type="scientific">Podospora anserina</name>
    <name type="common">Pleurage anserina</name>
    <dbReference type="NCBI Taxonomy" id="2587412"/>
    <lineage>
        <taxon>Eukaryota</taxon>
        <taxon>Fungi</taxon>
        <taxon>Dikarya</taxon>
        <taxon>Ascomycota</taxon>
        <taxon>Pezizomycotina</taxon>
        <taxon>Sordariomycetes</taxon>
        <taxon>Sordariomycetidae</taxon>
        <taxon>Sordariales</taxon>
        <taxon>Podosporaceae</taxon>
        <taxon>Podospora</taxon>
    </lineage>
</organism>
<protein>
    <recommendedName>
        <fullName>Adenylate cyclase</fullName>
        <ecNumber>4.6.1.1</ecNumber>
    </recommendedName>
    <alternativeName>
        <fullName>ATP pyrophosphate-lyase</fullName>
    </alternativeName>
    <alternativeName>
        <fullName>Adenylyl cyclase</fullName>
    </alternativeName>
</protein>
<proteinExistence type="inferred from homology"/>
<comment type="function">
    <text>Plays essential roles in regulation of cellular metabolism by catalyzing the synthesis of a second messenger, cAMP.</text>
</comment>
<comment type="catalytic activity">
    <reaction>
        <text>ATP = 3',5'-cyclic AMP + diphosphate</text>
        <dbReference type="Rhea" id="RHEA:15389"/>
        <dbReference type="ChEBI" id="CHEBI:30616"/>
        <dbReference type="ChEBI" id="CHEBI:33019"/>
        <dbReference type="ChEBI" id="CHEBI:58165"/>
        <dbReference type="EC" id="4.6.1.1"/>
    </reaction>
</comment>
<comment type="cofactor">
    <cofactor evidence="1">
        <name>Mg(2+)</name>
        <dbReference type="ChEBI" id="CHEBI:18420"/>
    </cofactor>
    <text evidence="1">Binds 1 Mg(2+) ion per subunit.</text>
</comment>
<comment type="similarity">
    <text evidence="7">Belongs to the adenylyl cyclase class-3 family.</text>
</comment>
<dbReference type="EC" id="4.6.1.1"/>
<dbReference type="EMBL" id="L43413">
    <property type="protein sequence ID" value="AAB05642.1"/>
    <property type="molecule type" value="Genomic_DNA"/>
</dbReference>
<dbReference type="PIR" id="JC4747">
    <property type="entry name" value="JC4747"/>
</dbReference>
<dbReference type="SMR" id="Q01513"/>
<dbReference type="VEuPathDB" id="FungiDB:PODANS_1_3040"/>
<dbReference type="GO" id="GO:0005737">
    <property type="term" value="C:cytoplasm"/>
    <property type="evidence" value="ECO:0007669"/>
    <property type="project" value="TreeGrafter"/>
</dbReference>
<dbReference type="GO" id="GO:0004016">
    <property type="term" value="F:adenylate cyclase activity"/>
    <property type="evidence" value="ECO:0007669"/>
    <property type="project" value="UniProtKB-EC"/>
</dbReference>
<dbReference type="GO" id="GO:0005524">
    <property type="term" value="F:ATP binding"/>
    <property type="evidence" value="ECO:0007669"/>
    <property type="project" value="UniProtKB-KW"/>
</dbReference>
<dbReference type="GO" id="GO:0000287">
    <property type="term" value="F:magnesium ion binding"/>
    <property type="evidence" value="ECO:0007669"/>
    <property type="project" value="InterPro"/>
</dbReference>
<dbReference type="GO" id="GO:0006171">
    <property type="term" value="P:cAMP biosynthetic process"/>
    <property type="evidence" value="ECO:0007669"/>
    <property type="project" value="UniProtKB-KW"/>
</dbReference>
<dbReference type="GO" id="GO:0035556">
    <property type="term" value="P:intracellular signal transduction"/>
    <property type="evidence" value="ECO:0007669"/>
    <property type="project" value="InterPro"/>
</dbReference>
<dbReference type="CDD" id="cd07302">
    <property type="entry name" value="CHD"/>
    <property type="match status" value="1"/>
</dbReference>
<dbReference type="CDD" id="cd00143">
    <property type="entry name" value="PP2Cc"/>
    <property type="match status" value="1"/>
</dbReference>
<dbReference type="CDD" id="cd17214">
    <property type="entry name" value="RA_CYR1_like"/>
    <property type="match status" value="1"/>
</dbReference>
<dbReference type="FunFam" id="3.60.40.10:FF:000055">
    <property type="entry name" value="Adenylate cyclase AcyA"/>
    <property type="match status" value="1"/>
</dbReference>
<dbReference type="FunFam" id="3.80.10.10:FF:000220">
    <property type="entry name" value="Adenylate cyclase AcyA"/>
    <property type="match status" value="1"/>
</dbReference>
<dbReference type="FunFam" id="3.80.10.10:FF:000305">
    <property type="entry name" value="Adenylate cyclase AcyA"/>
    <property type="match status" value="1"/>
</dbReference>
<dbReference type="Gene3D" id="3.30.70.1230">
    <property type="entry name" value="Nucleotide cyclase"/>
    <property type="match status" value="1"/>
</dbReference>
<dbReference type="Gene3D" id="3.60.40.10">
    <property type="entry name" value="PPM-type phosphatase domain"/>
    <property type="match status" value="1"/>
</dbReference>
<dbReference type="Gene3D" id="3.80.10.10">
    <property type="entry name" value="Ribonuclease Inhibitor"/>
    <property type="match status" value="3"/>
</dbReference>
<dbReference type="InterPro" id="IPR001054">
    <property type="entry name" value="A/G_cyclase"/>
</dbReference>
<dbReference type="InterPro" id="IPR013716">
    <property type="entry name" value="Adenylate_cyclase_G-a-bd"/>
</dbReference>
<dbReference type="InterPro" id="IPR001611">
    <property type="entry name" value="Leu-rich_rpt"/>
</dbReference>
<dbReference type="InterPro" id="IPR003591">
    <property type="entry name" value="Leu-rich_rpt_typical-subtyp"/>
</dbReference>
<dbReference type="InterPro" id="IPR032675">
    <property type="entry name" value="LRR_dom_sf"/>
</dbReference>
<dbReference type="InterPro" id="IPR050216">
    <property type="entry name" value="LRR_domain-containing"/>
</dbReference>
<dbReference type="InterPro" id="IPR055414">
    <property type="entry name" value="LRR_R13L4/SHOC2-like"/>
</dbReference>
<dbReference type="InterPro" id="IPR029787">
    <property type="entry name" value="Nucleotide_cyclase"/>
</dbReference>
<dbReference type="InterPro" id="IPR036457">
    <property type="entry name" value="PPM-type-like_dom_sf"/>
</dbReference>
<dbReference type="InterPro" id="IPR001932">
    <property type="entry name" value="PPM-type_phosphatase-like_dom"/>
</dbReference>
<dbReference type="InterPro" id="IPR000159">
    <property type="entry name" value="RA_dom"/>
</dbReference>
<dbReference type="InterPro" id="IPR055071">
    <property type="entry name" value="RA_PHLPP-like"/>
</dbReference>
<dbReference type="PANTHER" id="PTHR48051">
    <property type="match status" value="1"/>
</dbReference>
<dbReference type="PANTHER" id="PTHR48051:SF1">
    <property type="entry name" value="RAS SUPPRESSOR PROTEIN 1"/>
    <property type="match status" value="1"/>
</dbReference>
<dbReference type="Pfam" id="PF08509">
    <property type="entry name" value="Ad_cyc_g-alpha"/>
    <property type="match status" value="1"/>
</dbReference>
<dbReference type="Pfam" id="PF00211">
    <property type="entry name" value="Guanylate_cyc"/>
    <property type="match status" value="1"/>
</dbReference>
<dbReference type="Pfam" id="PF23598">
    <property type="entry name" value="LRR_14"/>
    <property type="match status" value="1"/>
</dbReference>
<dbReference type="Pfam" id="PF13855">
    <property type="entry name" value="LRR_8"/>
    <property type="match status" value="1"/>
</dbReference>
<dbReference type="Pfam" id="PF00481">
    <property type="entry name" value="PP2C"/>
    <property type="match status" value="1"/>
</dbReference>
<dbReference type="Pfam" id="PF23010">
    <property type="entry name" value="RA_3"/>
    <property type="match status" value="1"/>
</dbReference>
<dbReference type="SMART" id="SM00789">
    <property type="entry name" value="Ad_cyc_g-alpha"/>
    <property type="match status" value="1"/>
</dbReference>
<dbReference type="SMART" id="SM00044">
    <property type="entry name" value="CYCc"/>
    <property type="match status" value="1"/>
</dbReference>
<dbReference type="SMART" id="SM00364">
    <property type="entry name" value="LRR_BAC"/>
    <property type="match status" value="12"/>
</dbReference>
<dbReference type="SMART" id="SM00365">
    <property type="entry name" value="LRR_SD22"/>
    <property type="match status" value="5"/>
</dbReference>
<dbReference type="SMART" id="SM00369">
    <property type="entry name" value="LRR_TYP"/>
    <property type="match status" value="12"/>
</dbReference>
<dbReference type="SMART" id="SM00332">
    <property type="entry name" value="PP2Cc"/>
    <property type="match status" value="1"/>
</dbReference>
<dbReference type="SMART" id="SM00314">
    <property type="entry name" value="RA"/>
    <property type="match status" value="1"/>
</dbReference>
<dbReference type="SUPFAM" id="SSF52058">
    <property type="entry name" value="L domain-like"/>
    <property type="match status" value="2"/>
</dbReference>
<dbReference type="SUPFAM" id="SSF55073">
    <property type="entry name" value="Nucleotide cyclase"/>
    <property type="match status" value="1"/>
</dbReference>
<dbReference type="SUPFAM" id="SSF81606">
    <property type="entry name" value="PP2C-like"/>
    <property type="match status" value="1"/>
</dbReference>
<dbReference type="PROSITE" id="PS50125">
    <property type="entry name" value="GUANYLATE_CYCLASE_2"/>
    <property type="match status" value="1"/>
</dbReference>
<dbReference type="PROSITE" id="PS51450">
    <property type="entry name" value="LRR"/>
    <property type="match status" value="17"/>
</dbReference>
<dbReference type="PROSITE" id="PS51746">
    <property type="entry name" value="PPM_2"/>
    <property type="match status" value="1"/>
</dbReference>
<dbReference type="PROSITE" id="PS50200">
    <property type="entry name" value="RA"/>
    <property type="match status" value="1"/>
</dbReference>
<sequence>MPRNDASSRFSSMTGSSTDSARSNITVKPLPSLPPSASSSSPFAASSNQTSNASRSASHGSRRAAPSRLKTDENGQLSRSFKDSDAQVSPTSTSPCVSPSSITSSNSIREHRMSDLADYRRDLAILDPAGGRASRTQQNNPSSGSLSQIAPWMAAAPTPASSGPLPTSFFNDSTDNLSLSSQTSPGLRNATARPSQTTTGSTESPETLYFTDERRPSIASITTTASSQGSRASGARGGIRKLQGFFGEEFPGRDSSEISLSHPIVGKEHRSHSYSHARPHRDRNYSNATDHGRDASPASRPRTPVPKPEVVPFLYQEADDIARYGEAPVRDILSGPDRERFVNDSSQQNNPPKTSGSGRSGHSIGVHLTGHHHRHNKSNEDPRSLRPTVSREDSTISVPKDRNGSSTMYGTRSRAQSPAPSTTGSYWGHKSGSTDGQTSPGQPKKSFLGRLGRRLKEKDDAPDLKKLGPASQSSLHSRPSRQELSKADGQFARGADGKYQPDVRDGIRPDLARPANGPQTFNKFSLSKKAPRSKTQDDLDEAIGPTDRQDVGTVFHLDTNLNNMDGILSKPAPLTPMNAHEIFDEVGSGKGSISYPSSNGAWNAPDSWAVLRDDDAGAQLPDTEDIGSPPRPEEKQHNYCIRVFRADGTFATLQMPLLTSVSELINQIVKKSYLQDPDKFKLVLKKHDLYKVLQSTDRPLLLQKRLLEQVGFEERDRIEDIGREDNSYLCRFLFYPFTDNSYEVMDQMEFLRSQKNNHIDLSGRSLSAIPVQLYPRANEIISLNLSRNLSLQVPRDFISVCPNLRDIKFNNNEARALPKSFGYASRLTMLDASNNRLESLESAALHNLTGLLKLNLANNKLKQLPREFEAFAVLRTLNISSNLLNNFPPFLAKLENLVDLDLSFNTIQSLPDNVGQMTSLERLVITNNELSGSLPPSFKNLRSLRELDIKYNAISNIDVISQLPKLEILSATRNNISQFSGTFERVRSIKLNWNPITKFEIKAPVPTLKALNLSNAQLASIDESFHNMSNLERLELDKNYFVSLPAHIGNLRRLEYFSIAHNSVGELPPEIGCLTELKRLDVRGNNIRKLPMELWWANKLDYLNASSNVLENFPKPASRAPHPPGETNGNTSFPTGRIGPPTGALSQTPSAEELNDPSRRPSQASSSLLSVGPSPVPGGADRKSSMVSVYGKGGRKTSVISRSTTQSSTALATPTASSRKDSSHTQRLTNTFAGSLRYLYMADNQLDDDCFDQLCMLENLRVLNLSYNDLSDMPQRSIKSWPQLVELYLSGNELASLPADDLEEYSMLQTLHINGNKFTNLPADISRAKKLTVFDCGSNSLKYNIANVPYDWNWNLNPNLRYLNLSGNRRLEIKQSSVPTAAQNREQYTDFGRLTNLRVLGLMDVTVLNSTLPDQSEDRRVRTSGSLAGYMPYGMADTLGSKNEHLSTIDLVVPRFNSNDSETLLGLFDGQALSSGGSKIAKYLQENFGHIFSQELRDLKNTENPADALRRSFLSLNKDLIAAGNTHTEDRSLMVHRGSTAPLVLSREDMNSGGVATIVYIQNQDLYVANVGDVQAMIIKSDSTHVMLTKKHDPADPNERTRIREAGGWVSRNGRLNDLLEVSRAFGYLDLMPAVQSAPNIEKHTIGEHDEMILIATREVWEYLPKDVLVDVTRSVRQDPDPMRAAQKVRDLAMAYGCSNKMTVQMLGVSNLKARRERSRQHKGQSMPVYASLQDDGGSSTGMRRARKARDGPLDSTLGRLDAEVPAPTGLIAIVFTDIKNSTQLWETYPEAMRTAIKNHNELMRRQLRTIGGFEVKTEGDAFMVSFPTATSALLWCFAVQCKLLHLDWPAELYNSVNCQPVYDRDNNLIFKGLSVRMGIHWGEPLSEPDPVTRRMDYYGPMVNKASRISACADGGQIAVSSDFIAEIQRCLEHYQEPTSTAVDLNEDSFATAIRSELRSLSGQGFEVKDMGEKKLKGLENPEFIYSLYPHALSGRIETHSKHEKEQAQDLREIRPAILSPGSELSVEPDDIWSLWRVALRLEMLCSMLEDNSKALQPPETGLLDRMRQRGGEVSEDFLVNFLDHQVSRIETCINTIYMRHLVSQSSIGSNFGALRGPMDEVLKVVAEQFQLVAEYKARYGDLRA</sequence>
<feature type="chain" id="PRO_0000195729" description="Adenylate cyclase">
    <location>
        <begin position="1"/>
        <end position="2145"/>
    </location>
</feature>
<feature type="domain" description="Ras-associating" evidence="4">
    <location>
        <begin position="637"/>
        <end position="727"/>
    </location>
</feature>
<feature type="repeat" description="LRR 1">
    <location>
        <begin position="779"/>
        <end position="800"/>
    </location>
</feature>
<feature type="repeat" description="LRR 2">
    <location>
        <begin position="803"/>
        <end position="824"/>
    </location>
</feature>
<feature type="repeat" description="LRR 3">
    <location>
        <begin position="826"/>
        <end position="847"/>
    </location>
</feature>
<feature type="repeat" description="LRR 4">
    <location>
        <begin position="850"/>
        <end position="871"/>
    </location>
</feature>
<feature type="repeat" description="LRR 5">
    <location>
        <begin position="873"/>
        <end position="894"/>
    </location>
</feature>
<feature type="repeat" description="LRR 6">
    <location>
        <begin position="896"/>
        <end position="917"/>
    </location>
</feature>
<feature type="repeat" description="LRR 7">
    <location>
        <begin position="919"/>
        <end position="941"/>
    </location>
</feature>
<feature type="repeat" description="LRR 8">
    <location>
        <begin position="943"/>
        <end position="964"/>
    </location>
</feature>
<feature type="repeat" description="LRR 9">
    <location>
        <begin position="965"/>
        <end position="986"/>
    </location>
</feature>
<feature type="repeat" description="LRR 10">
    <location>
        <begin position="987"/>
        <end position="1006"/>
    </location>
</feature>
<feature type="repeat" description="LRR 11">
    <location>
        <begin position="1007"/>
        <end position="1028"/>
    </location>
</feature>
<feature type="repeat" description="LRR 12">
    <location>
        <begin position="1030"/>
        <end position="1051"/>
    </location>
</feature>
<feature type="repeat" description="LRR 13">
    <location>
        <begin position="1053"/>
        <end position="1074"/>
    </location>
</feature>
<feature type="repeat" description="LRR 14">
    <location>
        <begin position="1076"/>
        <end position="1097"/>
    </location>
</feature>
<feature type="repeat" description="LRR 15">
    <location>
        <begin position="1099"/>
        <end position="1120"/>
    </location>
</feature>
<feature type="repeat" description="LRR 16">
    <location>
        <begin position="1235"/>
        <end position="1255"/>
    </location>
</feature>
<feature type="repeat" description="LRR 17">
    <location>
        <begin position="1259"/>
        <end position="1280"/>
    </location>
</feature>
<feature type="repeat" description="LRR 18">
    <location>
        <begin position="1283"/>
        <end position="1304"/>
    </location>
</feature>
<feature type="repeat" description="LRR 19">
    <location>
        <begin position="1307"/>
        <end position="1328"/>
    </location>
</feature>
<feature type="repeat" description="LRR 20">
    <location>
        <begin position="1330"/>
        <end position="1352"/>
    </location>
</feature>
<feature type="repeat" description="LRR 21">
    <location>
        <begin position="1359"/>
        <end position="1380"/>
    </location>
</feature>
<feature type="domain" description="PPM-type phosphatase" evidence="5">
    <location>
        <begin position="1432"/>
        <end position="1709"/>
    </location>
</feature>
<feature type="domain" description="Guanylate cyclase" evidence="3">
    <location>
        <begin position="1773"/>
        <end position="1910"/>
    </location>
</feature>
<feature type="region of interest" description="Disordered" evidence="6">
    <location>
        <begin position="1"/>
        <end position="115"/>
    </location>
</feature>
<feature type="region of interest" description="Disordered" evidence="6">
    <location>
        <begin position="127"/>
        <end position="236"/>
    </location>
</feature>
<feature type="region of interest" description="Disordered" evidence="6">
    <location>
        <begin position="266"/>
        <end position="307"/>
    </location>
</feature>
<feature type="region of interest" description="Disordered" evidence="6">
    <location>
        <begin position="329"/>
        <end position="547"/>
    </location>
</feature>
<feature type="region of interest" description="Disordered" evidence="6">
    <location>
        <begin position="1114"/>
        <end position="1226"/>
    </location>
</feature>
<feature type="region of interest" description="Disordered" evidence="6">
    <location>
        <begin position="1718"/>
        <end position="1760"/>
    </location>
</feature>
<feature type="compositionally biased region" description="Low complexity" evidence="6">
    <location>
        <begin position="7"/>
        <end position="23"/>
    </location>
</feature>
<feature type="compositionally biased region" description="Low complexity" evidence="6">
    <location>
        <begin position="35"/>
        <end position="68"/>
    </location>
</feature>
<feature type="compositionally biased region" description="Low complexity" evidence="6">
    <location>
        <begin position="89"/>
        <end position="107"/>
    </location>
</feature>
<feature type="compositionally biased region" description="Polar residues" evidence="6">
    <location>
        <begin position="134"/>
        <end position="148"/>
    </location>
</feature>
<feature type="compositionally biased region" description="Polar residues" evidence="6">
    <location>
        <begin position="159"/>
        <end position="205"/>
    </location>
</feature>
<feature type="compositionally biased region" description="Low complexity" evidence="6">
    <location>
        <begin position="217"/>
        <end position="234"/>
    </location>
</feature>
<feature type="compositionally biased region" description="Basic residues" evidence="6">
    <location>
        <begin position="269"/>
        <end position="281"/>
    </location>
</feature>
<feature type="compositionally biased region" description="Polar residues" evidence="6">
    <location>
        <begin position="343"/>
        <end position="357"/>
    </location>
</feature>
<feature type="compositionally biased region" description="Basic and acidic residues" evidence="6">
    <location>
        <begin position="377"/>
        <end position="403"/>
    </location>
</feature>
<feature type="compositionally biased region" description="Polar residues" evidence="6">
    <location>
        <begin position="404"/>
        <end position="441"/>
    </location>
</feature>
<feature type="compositionally biased region" description="Basic and acidic residues" evidence="6">
    <location>
        <begin position="454"/>
        <end position="466"/>
    </location>
</feature>
<feature type="compositionally biased region" description="Basic and acidic residues" evidence="6">
    <location>
        <begin position="495"/>
        <end position="511"/>
    </location>
</feature>
<feature type="compositionally biased region" description="Low complexity" evidence="6">
    <location>
        <begin position="1160"/>
        <end position="1179"/>
    </location>
</feature>
<feature type="compositionally biased region" description="Low complexity" evidence="6">
    <location>
        <begin position="1201"/>
        <end position="1217"/>
    </location>
</feature>
<feature type="binding site" evidence="2">
    <location>
        <position position="1778"/>
    </location>
    <ligand>
        <name>Mg(2+)</name>
        <dbReference type="ChEBI" id="CHEBI:18420"/>
    </ligand>
</feature>
<feature type="binding site" evidence="2">
    <location>
        <position position="1821"/>
    </location>
    <ligand>
        <name>Mg(2+)</name>
        <dbReference type="ChEBI" id="CHEBI:18420"/>
    </ligand>
</feature>
<reference key="1">
    <citation type="journal article" date="1996" name="Gene">
        <title>An additional copy of the adenylate cyclase-encoding gene relieves developmental defects produced by a mutation in a vegetative incompatibility-controlling gene in Podospora anserina.</title>
        <authorList>
            <person name="Loubradou G."/>
            <person name="Begueret J."/>
            <person name="Turcq B."/>
        </authorList>
    </citation>
    <scope>NUCLEOTIDE SEQUENCE [GENOMIC DNA]</scope>
</reference>
<evidence type="ECO:0000250" key="1"/>
<evidence type="ECO:0000250" key="2">
    <source>
        <dbReference type="UniProtKB" id="Q99280"/>
    </source>
</evidence>
<evidence type="ECO:0000255" key="3">
    <source>
        <dbReference type="PROSITE-ProRule" id="PRU00099"/>
    </source>
</evidence>
<evidence type="ECO:0000255" key="4">
    <source>
        <dbReference type="PROSITE-ProRule" id="PRU00166"/>
    </source>
</evidence>
<evidence type="ECO:0000255" key="5">
    <source>
        <dbReference type="PROSITE-ProRule" id="PRU01082"/>
    </source>
</evidence>
<evidence type="ECO:0000256" key="6">
    <source>
        <dbReference type="SAM" id="MobiDB-lite"/>
    </source>
</evidence>
<evidence type="ECO:0000305" key="7"/>